<keyword id="KW-0963">Cytoplasm</keyword>
<keyword id="KW-0444">Lipid biosynthesis</keyword>
<keyword id="KW-0443">Lipid metabolism</keyword>
<keyword id="KW-0594">Phospholipid biosynthesis</keyword>
<keyword id="KW-1208">Phospholipid metabolism</keyword>
<keyword id="KW-0808">Transferase</keyword>
<dbReference type="EC" id="2.3.1.274" evidence="1"/>
<dbReference type="EMBL" id="CP000075">
    <property type="protein sequence ID" value="AAY36693.1"/>
    <property type="status" value="ALT_INIT"/>
    <property type="molecule type" value="Genomic_DNA"/>
</dbReference>
<dbReference type="RefSeq" id="WP_054091481.1">
    <property type="nucleotide sequence ID" value="NC_007005.1"/>
</dbReference>
<dbReference type="RefSeq" id="YP_234731.1">
    <property type="nucleotide sequence ID" value="NC_007005.1"/>
</dbReference>
<dbReference type="SMR" id="Q4ZVX9"/>
<dbReference type="STRING" id="205918.Psyr_1645"/>
<dbReference type="KEGG" id="psb:Psyr_1645"/>
<dbReference type="PATRIC" id="fig|205918.7.peg.1682"/>
<dbReference type="eggNOG" id="COG0416">
    <property type="taxonomic scope" value="Bacteria"/>
</dbReference>
<dbReference type="HOGENOM" id="CLU_039379_1_0_6"/>
<dbReference type="OrthoDB" id="9806408at2"/>
<dbReference type="UniPathway" id="UPA00085"/>
<dbReference type="Proteomes" id="UP000000426">
    <property type="component" value="Chromosome"/>
</dbReference>
<dbReference type="GO" id="GO:0005737">
    <property type="term" value="C:cytoplasm"/>
    <property type="evidence" value="ECO:0007669"/>
    <property type="project" value="UniProtKB-SubCell"/>
</dbReference>
<dbReference type="GO" id="GO:0043811">
    <property type="term" value="F:phosphate:acyl-[acyl carrier protein] acyltransferase activity"/>
    <property type="evidence" value="ECO:0007669"/>
    <property type="project" value="UniProtKB-UniRule"/>
</dbReference>
<dbReference type="GO" id="GO:0006633">
    <property type="term" value="P:fatty acid biosynthetic process"/>
    <property type="evidence" value="ECO:0007669"/>
    <property type="project" value="UniProtKB-UniRule"/>
</dbReference>
<dbReference type="GO" id="GO:0008654">
    <property type="term" value="P:phospholipid biosynthetic process"/>
    <property type="evidence" value="ECO:0007669"/>
    <property type="project" value="UniProtKB-KW"/>
</dbReference>
<dbReference type="Gene3D" id="3.40.718.10">
    <property type="entry name" value="Isopropylmalate Dehydrogenase"/>
    <property type="match status" value="1"/>
</dbReference>
<dbReference type="HAMAP" id="MF_00019">
    <property type="entry name" value="PlsX"/>
    <property type="match status" value="1"/>
</dbReference>
<dbReference type="InterPro" id="IPR003664">
    <property type="entry name" value="FA_synthesis"/>
</dbReference>
<dbReference type="InterPro" id="IPR012281">
    <property type="entry name" value="Phospholipid_synth_PlsX-like"/>
</dbReference>
<dbReference type="NCBIfam" id="TIGR00182">
    <property type="entry name" value="plsX"/>
    <property type="match status" value="1"/>
</dbReference>
<dbReference type="PANTHER" id="PTHR30100">
    <property type="entry name" value="FATTY ACID/PHOSPHOLIPID SYNTHESIS PROTEIN PLSX"/>
    <property type="match status" value="1"/>
</dbReference>
<dbReference type="PANTHER" id="PTHR30100:SF1">
    <property type="entry name" value="PHOSPHATE ACYLTRANSFERASE"/>
    <property type="match status" value="1"/>
</dbReference>
<dbReference type="Pfam" id="PF02504">
    <property type="entry name" value="FA_synthesis"/>
    <property type="match status" value="1"/>
</dbReference>
<dbReference type="PIRSF" id="PIRSF002465">
    <property type="entry name" value="Phsphlp_syn_PlsX"/>
    <property type="match status" value="1"/>
</dbReference>
<dbReference type="SUPFAM" id="SSF53659">
    <property type="entry name" value="Isocitrate/Isopropylmalate dehydrogenase-like"/>
    <property type="match status" value="1"/>
</dbReference>
<gene>
    <name evidence="1" type="primary">plsX</name>
    <name type="ordered locus">Psyr_1645</name>
</gene>
<organism>
    <name type="scientific">Pseudomonas syringae pv. syringae (strain B728a)</name>
    <dbReference type="NCBI Taxonomy" id="205918"/>
    <lineage>
        <taxon>Bacteria</taxon>
        <taxon>Pseudomonadati</taxon>
        <taxon>Pseudomonadota</taxon>
        <taxon>Gammaproteobacteria</taxon>
        <taxon>Pseudomonadales</taxon>
        <taxon>Pseudomonadaceae</taxon>
        <taxon>Pseudomonas</taxon>
        <taxon>Pseudomonas syringae</taxon>
    </lineage>
</organism>
<name>PLSX_PSEU2</name>
<proteinExistence type="inferred from homology"/>
<accession>Q4ZVX9</accession>
<feature type="chain" id="PRO_0000329257" description="Phosphate acyltransferase">
    <location>
        <begin position="1"/>
        <end position="340"/>
    </location>
</feature>
<comment type="function">
    <text evidence="1">Catalyzes the reversible formation of acyl-phosphate (acyl-PO(4)) from acyl-[acyl-carrier-protein] (acyl-ACP). This enzyme utilizes acyl-ACP as fatty acyl donor, but not acyl-CoA.</text>
</comment>
<comment type="catalytic activity">
    <reaction evidence="1">
        <text>a fatty acyl-[ACP] + phosphate = an acyl phosphate + holo-[ACP]</text>
        <dbReference type="Rhea" id="RHEA:42292"/>
        <dbReference type="Rhea" id="RHEA-COMP:9685"/>
        <dbReference type="Rhea" id="RHEA-COMP:14125"/>
        <dbReference type="ChEBI" id="CHEBI:43474"/>
        <dbReference type="ChEBI" id="CHEBI:59918"/>
        <dbReference type="ChEBI" id="CHEBI:64479"/>
        <dbReference type="ChEBI" id="CHEBI:138651"/>
        <dbReference type="EC" id="2.3.1.274"/>
    </reaction>
</comment>
<comment type="pathway">
    <text evidence="1">Lipid metabolism; phospholipid metabolism.</text>
</comment>
<comment type="subunit">
    <text evidence="1">Homodimer. Probably interacts with PlsY.</text>
</comment>
<comment type="subcellular location">
    <subcellularLocation>
        <location evidence="1">Cytoplasm</location>
    </subcellularLocation>
    <text evidence="1">Associated with the membrane possibly through PlsY.</text>
</comment>
<comment type="similarity">
    <text evidence="1">Belongs to the PlsX family.</text>
</comment>
<comment type="sequence caution" evidence="2">
    <conflict type="erroneous initiation">
        <sequence resource="EMBL-CDS" id="AAY36693"/>
    </conflict>
</comment>
<evidence type="ECO:0000255" key="1">
    <source>
        <dbReference type="HAMAP-Rule" id="MF_00019"/>
    </source>
</evidence>
<evidence type="ECO:0000305" key="2"/>
<reference key="1">
    <citation type="journal article" date="2005" name="Proc. Natl. Acad. Sci. U.S.A.">
        <title>Comparison of the complete genome sequences of Pseudomonas syringae pv. syringae B728a and pv. tomato DC3000.</title>
        <authorList>
            <person name="Feil H."/>
            <person name="Feil W.S."/>
            <person name="Chain P."/>
            <person name="Larimer F."/>
            <person name="Dibartolo G."/>
            <person name="Copeland A."/>
            <person name="Lykidis A."/>
            <person name="Trong S."/>
            <person name="Nolan M."/>
            <person name="Goltsman E."/>
            <person name="Thiel J."/>
            <person name="Malfatti S."/>
            <person name="Loper J.E."/>
            <person name="Lapidus A."/>
            <person name="Detter J.C."/>
            <person name="Land M."/>
            <person name="Richardson P.M."/>
            <person name="Kyrpides N.C."/>
            <person name="Ivanova N."/>
            <person name="Lindow S.E."/>
        </authorList>
    </citation>
    <scope>NUCLEOTIDE SEQUENCE [LARGE SCALE GENOMIC DNA]</scope>
    <source>
        <strain>B728a</strain>
    </source>
</reference>
<protein>
    <recommendedName>
        <fullName evidence="1">Phosphate acyltransferase</fullName>
        <ecNumber evidence="1">2.3.1.274</ecNumber>
    </recommendedName>
    <alternativeName>
        <fullName evidence="1">Acyl-ACP phosphotransacylase</fullName>
    </alternativeName>
    <alternativeName>
        <fullName evidence="1">Acyl-[acyl-carrier-protein]--phosphate acyltransferase</fullName>
    </alternativeName>
    <alternativeName>
        <fullName evidence="1">Phosphate-acyl-ACP acyltransferase</fullName>
    </alternativeName>
</protein>
<sequence>MSAPIIAIDAMGGDFGPRNIVQASLACLTATPSLHLALVGQASLIEELVSAHEAVDRSRLRVIHASEAIAMDERPSQALRGKPDSSMRVALELVASGQAQACVSAGNTGALMALSRFVLKTLPGIDRPAMIAAIPTRSGHCQLLDLGANVDCSAEALYQFAVMGSVLAEILGVATPRVALLNVGTEDIKGNQQVKRAAGLLQAASGLNYIGYVEGDGLYRGEADVVVCDGFVGNVLLKSSEGLATMIAARIETLFQRNLLSRAVGALALPLLKRLQTDLAPARHNGASLLGLQGVVVKSHGSASVSGFQSAIQRAVVESRENLPQRLKGRLETMFQDGRT</sequence>